<name>TRPF_CHLTE</name>
<feature type="chain" id="PRO_0000154354" description="N-(5'-phosphoribosyl)anthranilate isomerase">
    <location>
        <begin position="1"/>
        <end position="221"/>
    </location>
</feature>
<keyword id="KW-0028">Amino-acid biosynthesis</keyword>
<keyword id="KW-0057">Aromatic amino acid biosynthesis</keyword>
<keyword id="KW-0413">Isomerase</keyword>
<keyword id="KW-1185">Reference proteome</keyword>
<keyword id="KW-0822">Tryptophan biosynthesis</keyword>
<reference key="1">
    <citation type="journal article" date="2002" name="Proc. Natl. Acad. Sci. U.S.A.">
        <title>The complete genome sequence of Chlorobium tepidum TLS, a photosynthetic, anaerobic, green-sulfur bacterium.</title>
        <authorList>
            <person name="Eisen J.A."/>
            <person name="Nelson K.E."/>
            <person name="Paulsen I.T."/>
            <person name="Heidelberg J.F."/>
            <person name="Wu M."/>
            <person name="Dodson R.J."/>
            <person name="DeBoy R.T."/>
            <person name="Gwinn M.L."/>
            <person name="Nelson W.C."/>
            <person name="Haft D.H."/>
            <person name="Hickey E.K."/>
            <person name="Peterson J.D."/>
            <person name="Durkin A.S."/>
            <person name="Kolonay J.F."/>
            <person name="Yang F."/>
            <person name="Holt I.E."/>
            <person name="Umayam L.A."/>
            <person name="Mason T.M."/>
            <person name="Brenner M."/>
            <person name="Shea T.P."/>
            <person name="Parksey D.S."/>
            <person name="Nierman W.C."/>
            <person name="Feldblyum T.V."/>
            <person name="Hansen C.L."/>
            <person name="Craven M.B."/>
            <person name="Radune D."/>
            <person name="Vamathevan J.J."/>
            <person name="Khouri H.M."/>
            <person name="White O."/>
            <person name="Gruber T.M."/>
            <person name="Ketchum K.A."/>
            <person name="Venter J.C."/>
            <person name="Tettelin H."/>
            <person name="Bryant D.A."/>
            <person name="Fraser C.M."/>
        </authorList>
    </citation>
    <scope>NUCLEOTIDE SEQUENCE [LARGE SCALE GENOMIC DNA]</scope>
    <source>
        <strain>ATCC 49652 / DSM 12025 / NBRC 103806 / TLS</strain>
    </source>
</reference>
<organism>
    <name type="scientific">Chlorobaculum tepidum (strain ATCC 49652 / DSM 12025 / NBRC 103806 / TLS)</name>
    <name type="common">Chlorobium tepidum</name>
    <dbReference type="NCBI Taxonomy" id="194439"/>
    <lineage>
        <taxon>Bacteria</taxon>
        <taxon>Pseudomonadati</taxon>
        <taxon>Chlorobiota</taxon>
        <taxon>Chlorobiia</taxon>
        <taxon>Chlorobiales</taxon>
        <taxon>Chlorobiaceae</taxon>
        <taxon>Chlorobaculum</taxon>
    </lineage>
</organism>
<sequence>MTKIKICGITRAQDALEAALAGADALGFNFSRKSPRRIDAETARSIIAGLPPLVTPVGVFVEQSPEEINDICRHCGLLVAQLHSDDYDAEKTLQIKGVRVIRVFRPSPGFEVSQVRKFTEKTGCRSFLFDAYSPAMAGGTGQSIEAQTAGSLFDETRDFSWALLAGGLKPENVGDAVTLIRPWGVDTASGVESGPGIKDALKIRQFVEAVRKADRSLTNCC</sequence>
<evidence type="ECO:0000255" key="1">
    <source>
        <dbReference type="HAMAP-Rule" id="MF_00135"/>
    </source>
</evidence>
<comment type="catalytic activity">
    <reaction evidence="1">
        <text>N-(5-phospho-beta-D-ribosyl)anthranilate = 1-(2-carboxyphenylamino)-1-deoxy-D-ribulose 5-phosphate</text>
        <dbReference type="Rhea" id="RHEA:21540"/>
        <dbReference type="ChEBI" id="CHEBI:18277"/>
        <dbReference type="ChEBI" id="CHEBI:58613"/>
        <dbReference type="EC" id="5.3.1.24"/>
    </reaction>
</comment>
<comment type="pathway">
    <text evidence="1">Amino-acid biosynthesis; L-tryptophan biosynthesis; L-tryptophan from chorismate: step 3/5.</text>
</comment>
<comment type="similarity">
    <text evidence="1">Belongs to the TrpF family.</text>
</comment>
<gene>
    <name evidence="1" type="primary">trpF</name>
    <name type="ordered locus">CT0718</name>
</gene>
<accession>Q8KEH1</accession>
<protein>
    <recommendedName>
        <fullName evidence="1">N-(5'-phosphoribosyl)anthranilate isomerase</fullName>
        <shortName evidence="1">PRAI</shortName>
        <ecNumber evidence="1">5.3.1.24</ecNumber>
    </recommendedName>
</protein>
<proteinExistence type="inferred from homology"/>
<dbReference type="EC" id="5.3.1.24" evidence="1"/>
<dbReference type="EMBL" id="AE006470">
    <property type="protein sequence ID" value="AAM71955.1"/>
    <property type="molecule type" value="Genomic_DNA"/>
</dbReference>
<dbReference type="RefSeq" id="NP_661613.1">
    <property type="nucleotide sequence ID" value="NC_002932.3"/>
</dbReference>
<dbReference type="RefSeq" id="WP_010932400.1">
    <property type="nucleotide sequence ID" value="NC_002932.3"/>
</dbReference>
<dbReference type="SMR" id="Q8KEH1"/>
<dbReference type="STRING" id="194439.CT0718"/>
<dbReference type="EnsemblBacteria" id="AAM71955">
    <property type="protein sequence ID" value="AAM71955"/>
    <property type="gene ID" value="CT0718"/>
</dbReference>
<dbReference type="KEGG" id="cte:CT0718"/>
<dbReference type="PATRIC" id="fig|194439.7.peg.658"/>
<dbReference type="eggNOG" id="COG0135">
    <property type="taxonomic scope" value="Bacteria"/>
</dbReference>
<dbReference type="HOGENOM" id="CLU_076364_2_0_10"/>
<dbReference type="OrthoDB" id="9786954at2"/>
<dbReference type="UniPathway" id="UPA00035">
    <property type="reaction ID" value="UER00042"/>
</dbReference>
<dbReference type="Proteomes" id="UP000001007">
    <property type="component" value="Chromosome"/>
</dbReference>
<dbReference type="GO" id="GO:0004640">
    <property type="term" value="F:phosphoribosylanthranilate isomerase activity"/>
    <property type="evidence" value="ECO:0007669"/>
    <property type="project" value="UniProtKB-UniRule"/>
</dbReference>
<dbReference type="GO" id="GO:0000162">
    <property type="term" value="P:L-tryptophan biosynthetic process"/>
    <property type="evidence" value="ECO:0007669"/>
    <property type="project" value="UniProtKB-UniRule"/>
</dbReference>
<dbReference type="CDD" id="cd00405">
    <property type="entry name" value="PRAI"/>
    <property type="match status" value="1"/>
</dbReference>
<dbReference type="Gene3D" id="3.20.20.70">
    <property type="entry name" value="Aldolase class I"/>
    <property type="match status" value="1"/>
</dbReference>
<dbReference type="HAMAP" id="MF_00135">
    <property type="entry name" value="PRAI"/>
    <property type="match status" value="1"/>
</dbReference>
<dbReference type="InterPro" id="IPR013785">
    <property type="entry name" value="Aldolase_TIM"/>
</dbReference>
<dbReference type="InterPro" id="IPR001240">
    <property type="entry name" value="PRAI_dom"/>
</dbReference>
<dbReference type="InterPro" id="IPR011060">
    <property type="entry name" value="RibuloseP-bd_barrel"/>
</dbReference>
<dbReference type="InterPro" id="IPR044643">
    <property type="entry name" value="TrpF_fam"/>
</dbReference>
<dbReference type="PANTHER" id="PTHR42894">
    <property type="entry name" value="N-(5'-PHOSPHORIBOSYL)ANTHRANILATE ISOMERASE"/>
    <property type="match status" value="1"/>
</dbReference>
<dbReference type="PANTHER" id="PTHR42894:SF1">
    <property type="entry name" value="N-(5'-PHOSPHORIBOSYL)ANTHRANILATE ISOMERASE"/>
    <property type="match status" value="1"/>
</dbReference>
<dbReference type="Pfam" id="PF00697">
    <property type="entry name" value="PRAI"/>
    <property type="match status" value="1"/>
</dbReference>
<dbReference type="SUPFAM" id="SSF51366">
    <property type="entry name" value="Ribulose-phoshate binding barrel"/>
    <property type="match status" value="1"/>
</dbReference>